<name>DXR_BURCJ</name>
<gene>
    <name evidence="1" type="primary">dxr</name>
    <name type="ordered locus">BceJ2315_20470</name>
    <name type="ORF">BCAL2085</name>
</gene>
<accession>B4ECM5</accession>
<sequence>MQKRLTLLGSTGSIGDSTLDVVARHPERFSVYALTAHRNGDKLVEQCLRFAPEVAVVGDAATAAHVDAKLRAAGSKTVVLHGPQALVDVSKSDGCDTVVAAIVGAAGLAPSLAAARAGKRILLANKEALVMSGAIFMDAVRDHGAILLPVDSEHNAIFQCMPRDAAEHGGISKIILTASGGPFRTREPATLVDVTPDEACKHPNWVMGRKISVDSATMMNKGLEVIEAHWIFGLPGDRIDVLIHPQSVIHSLVSYRDGSVLAQLGNPDMRTPIAHALAFPERVDAGVDQLDLAQIAQLSFEKPDYARFPCLALALKALEEGGIASAALNAANEVAVEAFLERRIGFMAIAATVDAVLNTLPNRAPDGLDDVLAADAEARRLAAAIIAKAPAPRVERTV</sequence>
<proteinExistence type="inferred from homology"/>
<organism>
    <name type="scientific">Burkholderia cenocepacia (strain ATCC BAA-245 / DSM 16553 / LMG 16656 / NCTC 13227 / J2315 / CF5610)</name>
    <name type="common">Burkholderia cepacia (strain J2315)</name>
    <dbReference type="NCBI Taxonomy" id="216591"/>
    <lineage>
        <taxon>Bacteria</taxon>
        <taxon>Pseudomonadati</taxon>
        <taxon>Pseudomonadota</taxon>
        <taxon>Betaproteobacteria</taxon>
        <taxon>Burkholderiales</taxon>
        <taxon>Burkholderiaceae</taxon>
        <taxon>Burkholderia</taxon>
        <taxon>Burkholderia cepacia complex</taxon>
    </lineage>
</organism>
<dbReference type="EC" id="1.1.1.267" evidence="1"/>
<dbReference type="EMBL" id="AM747720">
    <property type="protein sequence ID" value="CAR52385.1"/>
    <property type="molecule type" value="Genomic_DNA"/>
</dbReference>
<dbReference type="RefSeq" id="WP_006483824.1">
    <property type="nucleotide sequence ID" value="NC_011000.1"/>
</dbReference>
<dbReference type="SMR" id="B4ECM5"/>
<dbReference type="KEGG" id="bcj:BCAL2085"/>
<dbReference type="eggNOG" id="COG0743">
    <property type="taxonomic scope" value="Bacteria"/>
</dbReference>
<dbReference type="HOGENOM" id="CLU_035714_4_0_4"/>
<dbReference type="BioCyc" id="BCEN216591:G1G1V-2285-MONOMER"/>
<dbReference type="UniPathway" id="UPA00056">
    <property type="reaction ID" value="UER00092"/>
</dbReference>
<dbReference type="Proteomes" id="UP000001035">
    <property type="component" value="Chromosome 1"/>
</dbReference>
<dbReference type="GO" id="GO:0030604">
    <property type="term" value="F:1-deoxy-D-xylulose-5-phosphate reductoisomerase activity"/>
    <property type="evidence" value="ECO:0007669"/>
    <property type="project" value="UniProtKB-UniRule"/>
</dbReference>
<dbReference type="GO" id="GO:0030145">
    <property type="term" value="F:manganese ion binding"/>
    <property type="evidence" value="ECO:0007669"/>
    <property type="project" value="TreeGrafter"/>
</dbReference>
<dbReference type="GO" id="GO:0070402">
    <property type="term" value="F:NADPH binding"/>
    <property type="evidence" value="ECO:0007669"/>
    <property type="project" value="InterPro"/>
</dbReference>
<dbReference type="GO" id="GO:0051484">
    <property type="term" value="P:isopentenyl diphosphate biosynthetic process, methylerythritol 4-phosphate pathway involved in terpenoid biosynthetic process"/>
    <property type="evidence" value="ECO:0007669"/>
    <property type="project" value="TreeGrafter"/>
</dbReference>
<dbReference type="FunFam" id="3.40.50.720:FF:000045">
    <property type="entry name" value="1-deoxy-D-xylulose 5-phosphate reductoisomerase"/>
    <property type="match status" value="1"/>
</dbReference>
<dbReference type="Gene3D" id="1.10.1740.10">
    <property type="match status" value="1"/>
</dbReference>
<dbReference type="Gene3D" id="3.40.50.720">
    <property type="entry name" value="NAD(P)-binding Rossmann-like Domain"/>
    <property type="match status" value="1"/>
</dbReference>
<dbReference type="HAMAP" id="MF_00183">
    <property type="entry name" value="DXP_reductoisom"/>
    <property type="match status" value="1"/>
</dbReference>
<dbReference type="InterPro" id="IPR003821">
    <property type="entry name" value="DXP_reductoisomerase"/>
</dbReference>
<dbReference type="InterPro" id="IPR013644">
    <property type="entry name" value="DXP_reductoisomerase_C"/>
</dbReference>
<dbReference type="InterPro" id="IPR013512">
    <property type="entry name" value="DXP_reductoisomerase_N"/>
</dbReference>
<dbReference type="InterPro" id="IPR026877">
    <property type="entry name" value="DXPR_C"/>
</dbReference>
<dbReference type="InterPro" id="IPR036169">
    <property type="entry name" value="DXPR_C_sf"/>
</dbReference>
<dbReference type="InterPro" id="IPR036291">
    <property type="entry name" value="NAD(P)-bd_dom_sf"/>
</dbReference>
<dbReference type="NCBIfam" id="TIGR00243">
    <property type="entry name" value="Dxr"/>
    <property type="match status" value="1"/>
</dbReference>
<dbReference type="NCBIfam" id="NF003938">
    <property type="entry name" value="PRK05447.1-1"/>
    <property type="match status" value="1"/>
</dbReference>
<dbReference type="NCBIfam" id="NF009114">
    <property type="entry name" value="PRK12464.1"/>
    <property type="match status" value="1"/>
</dbReference>
<dbReference type="PANTHER" id="PTHR30525">
    <property type="entry name" value="1-DEOXY-D-XYLULOSE 5-PHOSPHATE REDUCTOISOMERASE"/>
    <property type="match status" value="1"/>
</dbReference>
<dbReference type="PANTHER" id="PTHR30525:SF0">
    <property type="entry name" value="1-DEOXY-D-XYLULOSE 5-PHOSPHATE REDUCTOISOMERASE, CHLOROPLASTIC"/>
    <property type="match status" value="1"/>
</dbReference>
<dbReference type="Pfam" id="PF08436">
    <property type="entry name" value="DXP_redisom_C"/>
    <property type="match status" value="1"/>
</dbReference>
<dbReference type="Pfam" id="PF02670">
    <property type="entry name" value="DXP_reductoisom"/>
    <property type="match status" value="1"/>
</dbReference>
<dbReference type="Pfam" id="PF13288">
    <property type="entry name" value="DXPR_C"/>
    <property type="match status" value="1"/>
</dbReference>
<dbReference type="PIRSF" id="PIRSF006205">
    <property type="entry name" value="Dxp_reductismrs"/>
    <property type="match status" value="1"/>
</dbReference>
<dbReference type="SUPFAM" id="SSF69055">
    <property type="entry name" value="1-deoxy-D-xylulose-5-phosphate reductoisomerase, C-terminal domain"/>
    <property type="match status" value="1"/>
</dbReference>
<dbReference type="SUPFAM" id="SSF55347">
    <property type="entry name" value="Glyceraldehyde-3-phosphate dehydrogenase-like, C-terminal domain"/>
    <property type="match status" value="1"/>
</dbReference>
<dbReference type="SUPFAM" id="SSF51735">
    <property type="entry name" value="NAD(P)-binding Rossmann-fold domains"/>
    <property type="match status" value="1"/>
</dbReference>
<feature type="chain" id="PRO_1000098477" description="1-deoxy-D-xylulose 5-phosphate reductoisomerase">
    <location>
        <begin position="1"/>
        <end position="398"/>
    </location>
</feature>
<feature type="binding site" evidence="1">
    <location>
        <position position="11"/>
    </location>
    <ligand>
        <name>NADPH</name>
        <dbReference type="ChEBI" id="CHEBI:57783"/>
    </ligand>
</feature>
<feature type="binding site" evidence="1">
    <location>
        <position position="12"/>
    </location>
    <ligand>
        <name>NADPH</name>
        <dbReference type="ChEBI" id="CHEBI:57783"/>
    </ligand>
</feature>
<feature type="binding site" evidence="1">
    <location>
        <position position="13"/>
    </location>
    <ligand>
        <name>NADPH</name>
        <dbReference type="ChEBI" id="CHEBI:57783"/>
    </ligand>
</feature>
<feature type="binding site" evidence="1">
    <location>
        <position position="14"/>
    </location>
    <ligand>
        <name>NADPH</name>
        <dbReference type="ChEBI" id="CHEBI:57783"/>
    </ligand>
</feature>
<feature type="binding site" evidence="1">
    <location>
        <position position="38"/>
    </location>
    <ligand>
        <name>NADPH</name>
        <dbReference type="ChEBI" id="CHEBI:57783"/>
    </ligand>
</feature>
<feature type="binding site" evidence="1">
    <location>
        <position position="39"/>
    </location>
    <ligand>
        <name>NADPH</name>
        <dbReference type="ChEBI" id="CHEBI:57783"/>
    </ligand>
</feature>
<feature type="binding site" evidence="1">
    <location>
        <position position="125"/>
    </location>
    <ligand>
        <name>NADPH</name>
        <dbReference type="ChEBI" id="CHEBI:57783"/>
    </ligand>
</feature>
<feature type="binding site" evidence="1">
    <location>
        <position position="126"/>
    </location>
    <ligand>
        <name>1-deoxy-D-xylulose 5-phosphate</name>
        <dbReference type="ChEBI" id="CHEBI:57792"/>
    </ligand>
</feature>
<feature type="binding site" evidence="1">
    <location>
        <position position="127"/>
    </location>
    <ligand>
        <name>NADPH</name>
        <dbReference type="ChEBI" id="CHEBI:57783"/>
    </ligand>
</feature>
<feature type="binding site" evidence="1">
    <location>
        <position position="151"/>
    </location>
    <ligand>
        <name>Mn(2+)</name>
        <dbReference type="ChEBI" id="CHEBI:29035"/>
    </ligand>
</feature>
<feature type="binding site" evidence="1">
    <location>
        <position position="152"/>
    </location>
    <ligand>
        <name>1-deoxy-D-xylulose 5-phosphate</name>
        <dbReference type="ChEBI" id="CHEBI:57792"/>
    </ligand>
</feature>
<feature type="binding site" evidence="1">
    <location>
        <position position="153"/>
    </location>
    <ligand>
        <name>1-deoxy-D-xylulose 5-phosphate</name>
        <dbReference type="ChEBI" id="CHEBI:57792"/>
    </ligand>
</feature>
<feature type="binding site" evidence="1">
    <location>
        <position position="153"/>
    </location>
    <ligand>
        <name>Mn(2+)</name>
        <dbReference type="ChEBI" id="CHEBI:29035"/>
    </ligand>
</feature>
<feature type="binding site" evidence="1">
    <location>
        <position position="179"/>
    </location>
    <ligand>
        <name>1-deoxy-D-xylulose 5-phosphate</name>
        <dbReference type="ChEBI" id="CHEBI:57792"/>
    </ligand>
</feature>
<feature type="binding site" evidence="1">
    <location>
        <position position="202"/>
    </location>
    <ligand>
        <name>1-deoxy-D-xylulose 5-phosphate</name>
        <dbReference type="ChEBI" id="CHEBI:57792"/>
    </ligand>
</feature>
<feature type="binding site" evidence="1">
    <location>
        <position position="208"/>
    </location>
    <ligand>
        <name>NADPH</name>
        <dbReference type="ChEBI" id="CHEBI:57783"/>
    </ligand>
</feature>
<feature type="binding site" evidence="1">
    <location>
        <position position="215"/>
    </location>
    <ligand>
        <name>1-deoxy-D-xylulose 5-phosphate</name>
        <dbReference type="ChEBI" id="CHEBI:57792"/>
    </ligand>
</feature>
<feature type="binding site" evidence="1">
    <location>
        <position position="220"/>
    </location>
    <ligand>
        <name>1-deoxy-D-xylulose 5-phosphate</name>
        <dbReference type="ChEBI" id="CHEBI:57792"/>
    </ligand>
</feature>
<feature type="binding site" evidence="1">
    <location>
        <position position="221"/>
    </location>
    <ligand>
        <name>1-deoxy-D-xylulose 5-phosphate</name>
        <dbReference type="ChEBI" id="CHEBI:57792"/>
    </ligand>
</feature>
<feature type="binding site" evidence="1">
    <location>
        <position position="224"/>
    </location>
    <ligand>
        <name>1-deoxy-D-xylulose 5-phosphate</name>
        <dbReference type="ChEBI" id="CHEBI:57792"/>
    </ligand>
</feature>
<feature type="binding site" evidence="1">
    <location>
        <position position="224"/>
    </location>
    <ligand>
        <name>Mn(2+)</name>
        <dbReference type="ChEBI" id="CHEBI:29035"/>
    </ligand>
</feature>
<reference key="1">
    <citation type="journal article" date="2009" name="J. Bacteriol.">
        <title>The genome of Burkholderia cenocepacia J2315, an epidemic pathogen of cystic fibrosis patients.</title>
        <authorList>
            <person name="Holden M.T."/>
            <person name="Seth-Smith H.M."/>
            <person name="Crossman L.C."/>
            <person name="Sebaihia M."/>
            <person name="Bentley S.D."/>
            <person name="Cerdeno-Tarraga A.M."/>
            <person name="Thomson N.R."/>
            <person name="Bason N."/>
            <person name="Quail M.A."/>
            <person name="Sharp S."/>
            <person name="Cherevach I."/>
            <person name="Churcher C."/>
            <person name="Goodhead I."/>
            <person name="Hauser H."/>
            <person name="Holroyd N."/>
            <person name="Mungall K."/>
            <person name="Scott P."/>
            <person name="Walker D."/>
            <person name="White B."/>
            <person name="Rose H."/>
            <person name="Iversen P."/>
            <person name="Mil-Homens D."/>
            <person name="Rocha E.P."/>
            <person name="Fialho A.M."/>
            <person name="Baldwin A."/>
            <person name="Dowson C."/>
            <person name="Barrell B.G."/>
            <person name="Govan J.R."/>
            <person name="Vandamme P."/>
            <person name="Hart C.A."/>
            <person name="Mahenthiralingam E."/>
            <person name="Parkhill J."/>
        </authorList>
    </citation>
    <scope>NUCLEOTIDE SEQUENCE [LARGE SCALE GENOMIC DNA]</scope>
    <source>
        <strain>ATCC BAA-245 / DSM 16553 / LMG 16656 / NCTC 13227 / J2315 / CF5610</strain>
    </source>
</reference>
<keyword id="KW-0414">Isoprene biosynthesis</keyword>
<keyword id="KW-0464">Manganese</keyword>
<keyword id="KW-0479">Metal-binding</keyword>
<keyword id="KW-0521">NADP</keyword>
<keyword id="KW-0560">Oxidoreductase</keyword>
<protein>
    <recommendedName>
        <fullName evidence="1">1-deoxy-D-xylulose 5-phosphate reductoisomerase</fullName>
        <shortName evidence="1">DXP reductoisomerase</shortName>
        <ecNumber evidence="1">1.1.1.267</ecNumber>
    </recommendedName>
    <alternativeName>
        <fullName evidence="1">1-deoxyxylulose-5-phosphate reductoisomerase</fullName>
    </alternativeName>
    <alternativeName>
        <fullName evidence="1">2-C-methyl-D-erythritol 4-phosphate synthase</fullName>
    </alternativeName>
</protein>
<comment type="function">
    <text evidence="1">Catalyzes the NADPH-dependent rearrangement and reduction of 1-deoxy-D-xylulose-5-phosphate (DXP) to 2-C-methyl-D-erythritol 4-phosphate (MEP).</text>
</comment>
<comment type="catalytic activity">
    <reaction evidence="1">
        <text>2-C-methyl-D-erythritol 4-phosphate + NADP(+) = 1-deoxy-D-xylulose 5-phosphate + NADPH + H(+)</text>
        <dbReference type="Rhea" id="RHEA:13717"/>
        <dbReference type="ChEBI" id="CHEBI:15378"/>
        <dbReference type="ChEBI" id="CHEBI:57783"/>
        <dbReference type="ChEBI" id="CHEBI:57792"/>
        <dbReference type="ChEBI" id="CHEBI:58262"/>
        <dbReference type="ChEBI" id="CHEBI:58349"/>
        <dbReference type="EC" id="1.1.1.267"/>
    </reaction>
    <physiologicalReaction direction="right-to-left" evidence="1">
        <dbReference type="Rhea" id="RHEA:13719"/>
    </physiologicalReaction>
</comment>
<comment type="cofactor">
    <cofactor evidence="1">
        <name>Mg(2+)</name>
        <dbReference type="ChEBI" id="CHEBI:18420"/>
    </cofactor>
    <cofactor evidence="1">
        <name>Mn(2+)</name>
        <dbReference type="ChEBI" id="CHEBI:29035"/>
    </cofactor>
</comment>
<comment type="pathway">
    <text evidence="1">Isoprenoid biosynthesis; isopentenyl diphosphate biosynthesis via DXP pathway; isopentenyl diphosphate from 1-deoxy-D-xylulose 5-phosphate: step 1/6.</text>
</comment>
<comment type="similarity">
    <text evidence="1">Belongs to the DXR family.</text>
</comment>
<evidence type="ECO:0000255" key="1">
    <source>
        <dbReference type="HAMAP-Rule" id="MF_00183"/>
    </source>
</evidence>